<keyword id="KW-0067">ATP-binding</keyword>
<keyword id="KW-0963">Cytoplasm</keyword>
<keyword id="KW-0418">Kinase</keyword>
<keyword id="KW-0520">NAD</keyword>
<keyword id="KW-0521">NADP</keyword>
<keyword id="KW-0547">Nucleotide-binding</keyword>
<keyword id="KW-0808">Transferase</keyword>
<accession>A1RLV5</accession>
<evidence type="ECO:0000255" key="1">
    <source>
        <dbReference type="HAMAP-Rule" id="MF_00361"/>
    </source>
</evidence>
<proteinExistence type="inferred from homology"/>
<feature type="chain" id="PRO_1000079519" description="NAD kinase">
    <location>
        <begin position="1"/>
        <end position="309"/>
    </location>
</feature>
<feature type="active site" description="Proton acceptor" evidence="1">
    <location>
        <position position="89"/>
    </location>
</feature>
<feature type="binding site" evidence="1">
    <location>
        <begin position="89"/>
        <end position="90"/>
    </location>
    <ligand>
        <name>NAD(+)</name>
        <dbReference type="ChEBI" id="CHEBI:57540"/>
    </ligand>
</feature>
<feature type="binding site" evidence="1">
    <location>
        <begin position="163"/>
        <end position="164"/>
    </location>
    <ligand>
        <name>NAD(+)</name>
        <dbReference type="ChEBI" id="CHEBI:57540"/>
    </ligand>
</feature>
<feature type="binding site" evidence="1">
    <location>
        <position position="174"/>
    </location>
    <ligand>
        <name>NAD(+)</name>
        <dbReference type="ChEBI" id="CHEBI:57540"/>
    </ligand>
</feature>
<feature type="binding site" evidence="1">
    <location>
        <position position="191"/>
    </location>
    <ligand>
        <name>NAD(+)</name>
        <dbReference type="ChEBI" id="CHEBI:57540"/>
    </ligand>
</feature>
<feature type="binding site" evidence="1">
    <location>
        <position position="193"/>
    </location>
    <ligand>
        <name>NAD(+)</name>
        <dbReference type="ChEBI" id="CHEBI:57540"/>
    </ligand>
</feature>
<feature type="binding site" evidence="1">
    <location>
        <begin position="204"/>
        <end position="209"/>
    </location>
    <ligand>
        <name>NAD(+)</name>
        <dbReference type="ChEBI" id="CHEBI:57540"/>
    </ligand>
</feature>
<comment type="function">
    <text evidence="1">Involved in the regulation of the intracellular balance of NAD and NADP, and is a key enzyme in the biosynthesis of NADP. Catalyzes specifically the phosphorylation on 2'-hydroxyl of the adenosine moiety of NAD to yield NADP.</text>
</comment>
<comment type="catalytic activity">
    <reaction evidence="1">
        <text>NAD(+) + ATP = ADP + NADP(+) + H(+)</text>
        <dbReference type="Rhea" id="RHEA:18629"/>
        <dbReference type="ChEBI" id="CHEBI:15378"/>
        <dbReference type="ChEBI" id="CHEBI:30616"/>
        <dbReference type="ChEBI" id="CHEBI:57540"/>
        <dbReference type="ChEBI" id="CHEBI:58349"/>
        <dbReference type="ChEBI" id="CHEBI:456216"/>
        <dbReference type="EC" id="2.7.1.23"/>
    </reaction>
</comment>
<comment type="cofactor">
    <cofactor evidence="1">
        <name>a divalent metal cation</name>
        <dbReference type="ChEBI" id="CHEBI:60240"/>
    </cofactor>
</comment>
<comment type="subcellular location">
    <subcellularLocation>
        <location evidence="1">Cytoplasm</location>
    </subcellularLocation>
</comment>
<comment type="similarity">
    <text evidence="1">Belongs to the NAD kinase family.</text>
</comment>
<reference key="1">
    <citation type="submission" date="2006-12" db="EMBL/GenBank/DDBJ databases">
        <title>Complete sequence of Shewanella sp. W3-18-1.</title>
        <authorList>
            <consortium name="US DOE Joint Genome Institute"/>
            <person name="Copeland A."/>
            <person name="Lucas S."/>
            <person name="Lapidus A."/>
            <person name="Barry K."/>
            <person name="Detter J.C."/>
            <person name="Glavina del Rio T."/>
            <person name="Hammon N."/>
            <person name="Israni S."/>
            <person name="Dalin E."/>
            <person name="Tice H."/>
            <person name="Pitluck S."/>
            <person name="Chain P."/>
            <person name="Malfatti S."/>
            <person name="Shin M."/>
            <person name="Vergez L."/>
            <person name="Schmutz J."/>
            <person name="Larimer F."/>
            <person name="Land M."/>
            <person name="Hauser L."/>
            <person name="Kyrpides N."/>
            <person name="Lykidis A."/>
            <person name="Tiedje J."/>
            <person name="Richardson P."/>
        </authorList>
    </citation>
    <scope>NUCLEOTIDE SEQUENCE [LARGE SCALE GENOMIC DNA]</scope>
    <source>
        <strain>W3-18-1</strain>
    </source>
</reference>
<organism>
    <name type="scientific">Shewanella sp. (strain W3-18-1)</name>
    <dbReference type="NCBI Taxonomy" id="351745"/>
    <lineage>
        <taxon>Bacteria</taxon>
        <taxon>Pseudomonadati</taxon>
        <taxon>Pseudomonadota</taxon>
        <taxon>Gammaproteobacteria</taxon>
        <taxon>Alteromonadales</taxon>
        <taxon>Shewanellaceae</taxon>
        <taxon>Shewanella</taxon>
    </lineage>
</organism>
<protein>
    <recommendedName>
        <fullName evidence="1">NAD kinase</fullName>
        <ecNumber evidence="1">2.7.1.23</ecNumber>
    </recommendedName>
    <alternativeName>
        <fullName evidence="1">ATP-dependent NAD kinase</fullName>
    </alternativeName>
</protein>
<gene>
    <name evidence="1" type="primary">nadK</name>
    <name type="ordered locus">Sputw3181_2833</name>
</gene>
<dbReference type="EC" id="2.7.1.23" evidence="1"/>
<dbReference type="EMBL" id="CP000503">
    <property type="protein sequence ID" value="ABM25650.1"/>
    <property type="molecule type" value="Genomic_DNA"/>
</dbReference>
<dbReference type="SMR" id="A1RLV5"/>
<dbReference type="KEGG" id="shw:Sputw3181_2833"/>
<dbReference type="HOGENOM" id="CLU_008831_0_1_6"/>
<dbReference type="Proteomes" id="UP000002597">
    <property type="component" value="Chromosome"/>
</dbReference>
<dbReference type="GO" id="GO:0005737">
    <property type="term" value="C:cytoplasm"/>
    <property type="evidence" value="ECO:0007669"/>
    <property type="project" value="UniProtKB-SubCell"/>
</dbReference>
<dbReference type="GO" id="GO:0005524">
    <property type="term" value="F:ATP binding"/>
    <property type="evidence" value="ECO:0007669"/>
    <property type="project" value="UniProtKB-KW"/>
</dbReference>
<dbReference type="GO" id="GO:0046872">
    <property type="term" value="F:metal ion binding"/>
    <property type="evidence" value="ECO:0007669"/>
    <property type="project" value="UniProtKB-UniRule"/>
</dbReference>
<dbReference type="GO" id="GO:0051287">
    <property type="term" value="F:NAD binding"/>
    <property type="evidence" value="ECO:0007669"/>
    <property type="project" value="UniProtKB-ARBA"/>
</dbReference>
<dbReference type="GO" id="GO:0003951">
    <property type="term" value="F:NAD+ kinase activity"/>
    <property type="evidence" value="ECO:0007669"/>
    <property type="project" value="UniProtKB-UniRule"/>
</dbReference>
<dbReference type="GO" id="GO:0019674">
    <property type="term" value="P:NAD metabolic process"/>
    <property type="evidence" value="ECO:0007669"/>
    <property type="project" value="InterPro"/>
</dbReference>
<dbReference type="GO" id="GO:0006741">
    <property type="term" value="P:NADP biosynthetic process"/>
    <property type="evidence" value="ECO:0007669"/>
    <property type="project" value="UniProtKB-UniRule"/>
</dbReference>
<dbReference type="FunFam" id="2.60.200.30:FF:000001">
    <property type="entry name" value="NAD kinase"/>
    <property type="match status" value="1"/>
</dbReference>
<dbReference type="Gene3D" id="3.40.50.10330">
    <property type="entry name" value="Probable inorganic polyphosphate/atp-NAD kinase, domain 1"/>
    <property type="match status" value="1"/>
</dbReference>
<dbReference type="Gene3D" id="2.60.200.30">
    <property type="entry name" value="Probable inorganic polyphosphate/atp-NAD kinase, domain 2"/>
    <property type="match status" value="1"/>
</dbReference>
<dbReference type="HAMAP" id="MF_00361">
    <property type="entry name" value="NAD_kinase"/>
    <property type="match status" value="1"/>
</dbReference>
<dbReference type="InterPro" id="IPR017438">
    <property type="entry name" value="ATP-NAD_kinase_N"/>
</dbReference>
<dbReference type="InterPro" id="IPR017437">
    <property type="entry name" value="ATP-NAD_kinase_PpnK-typ_C"/>
</dbReference>
<dbReference type="InterPro" id="IPR016064">
    <property type="entry name" value="NAD/diacylglycerol_kinase_sf"/>
</dbReference>
<dbReference type="InterPro" id="IPR002504">
    <property type="entry name" value="NADK"/>
</dbReference>
<dbReference type="NCBIfam" id="NF002306">
    <property type="entry name" value="PRK01231.1"/>
    <property type="match status" value="1"/>
</dbReference>
<dbReference type="NCBIfam" id="NF002893">
    <property type="entry name" value="PRK03378.1"/>
    <property type="match status" value="1"/>
</dbReference>
<dbReference type="PANTHER" id="PTHR20275">
    <property type="entry name" value="NAD KINASE"/>
    <property type="match status" value="1"/>
</dbReference>
<dbReference type="PANTHER" id="PTHR20275:SF0">
    <property type="entry name" value="NAD KINASE"/>
    <property type="match status" value="1"/>
</dbReference>
<dbReference type="Pfam" id="PF01513">
    <property type="entry name" value="NAD_kinase"/>
    <property type="match status" value="1"/>
</dbReference>
<dbReference type="Pfam" id="PF20143">
    <property type="entry name" value="NAD_kinase_C"/>
    <property type="match status" value="1"/>
</dbReference>
<dbReference type="SUPFAM" id="SSF111331">
    <property type="entry name" value="NAD kinase/diacylglycerol kinase-like"/>
    <property type="match status" value="1"/>
</dbReference>
<sequence length="309" mass="33938">MGINFDVSRPKARSSINMTTKFHTIGLIGKPHHLGTNQTLKRLHHWLTMQGYEVLAEERVSTELGTNIEAVDLLEIGARCDLAIVVGGDGNMLGAARVLARFDLGVIGVNRGNLGFLTDLPPDAFEEALARVLDGEFDTEHRFLLEAEVYRHGMLKASNTAVNEAVLHPGKIAHMIEFEVYIDDQFMYSQRADGMIVSTPTGSTAYALSAGGAILTPNLQALILVPMFPHTLSCRPIVVDACSTIKMVVSPENGENLEVSCDGHVHLAVLPGDEIIIRRSSERLRLIHPKGHNYFHVLRTKLGWGSKLF</sequence>
<name>NADK_SHESW</name>